<reference key="1">
    <citation type="journal article" date="2002" name="Proc. Natl. Acad. Sci. U.S.A.">
        <title>Genome sequence of Streptococcus mutans UA159, a cariogenic dental pathogen.</title>
        <authorList>
            <person name="Ajdic D.J."/>
            <person name="McShan W.M."/>
            <person name="McLaughlin R.E."/>
            <person name="Savic G."/>
            <person name="Chang J."/>
            <person name="Carson M.B."/>
            <person name="Primeaux C."/>
            <person name="Tian R."/>
            <person name="Kenton S."/>
            <person name="Jia H.G."/>
            <person name="Lin S.P."/>
            <person name="Qian Y."/>
            <person name="Li S."/>
            <person name="Zhu H."/>
            <person name="Najar F.Z."/>
            <person name="Lai H."/>
            <person name="White J."/>
            <person name="Roe B.A."/>
            <person name="Ferretti J.J."/>
        </authorList>
    </citation>
    <scope>NUCLEOTIDE SEQUENCE [LARGE SCALE GENOMIC DNA]</scope>
    <source>
        <strain>ATCC 700610 / UA159</strain>
    </source>
</reference>
<feature type="chain" id="PRO_0000161207" description="Elongation factor Ts">
    <location>
        <begin position="1"/>
        <end position="348"/>
    </location>
</feature>
<feature type="region of interest" description="Involved in Mg(2+) ion dislocation from EF-Tu" evidence="1">
    <location>
        <begin position="80"/>
        <end position="83"/>
    </location>
</feature>
<keyword id="KW-0963">Cytoplasm</keyword>
<keyword id="KW-0251">Elongation factor</keyword>
<keyword id="KW-0648">Protein biosynthesis</keyword>
<keyword id="KW-1185">Reference proteome</keyword>
<accession>Q8DS12</accession>
<name>EFTS_STRMU</name>
<proteinExistence type="inferred from homology"/>
<comment type="function">
    <text evidence="1">Associates with the EF-Tu.GDP complex and induces the exchange of GDP to GTP. It remains bound to the aminoacyl-tRNA.EF-Tu.GTP complex up to the GTP hydrolysis stage on the ribosome.</text>
</comment>
<comment type="subcellular location">
    <subcellularLocation>
        <location evidence="1">Cytoplasm</location>
    </subcellularLocation>
</comment>
<comment type="similarity">
    <text evidence="1">Belongs to the EF-Ts family.</text>
</comment>
<sequence length="348" mass="37719">MANITAALVKELREKTGAGVMDAKKALVEVEGDMGKAIELLREKGMAKAAKKADRVAAEGLTGVYVDGNVAAIVEVNAETDFVAKNAQFVDLVNETAKVIAEGKPANNEEALALKTAAGDTLEAAYVNATATIGEKISFRRFALVEKADKQVFGAYQHNGGKIGVITVLEGENTDEALAKQLAMHVAAMNPSVLSYKELSEEFIHDELAQMNHKIEQDNESRAMVDKPALPLLKYGSKGQLTDEVVAQAEEDIKAELKAEGKPEKIWDKIIPGKMARFFLDNTKVDQQYTLLSQVYIMDDSKTVEAYMESVNGKVISFVRFEVGEGIEKAANDFENEVAATMAAALNK</sequence>
<dbReference type="EMBL" id="AE014133">
    <property type="protein sequence ID" value="AAN59634.1"/>
    <property type="molecule type" value="Genomic_DNA"/>
</dbReference>
<dbReference type="RefSeq" id="NP_722328.1">
    <property type="nucleotide sequence ID" value="NC_004350.2"/>
</dbReference>
<dbReference type="RefSeq" id="WP_002262346.1">
    <property type="nucleotide sequence ID" value="NC_004350.2"/>
</dbReference>
<dbReference type="SMR" id="Q8DS12"/>
<dbReference type="STRING" id="210007.SMU_2031"/>
<dbReference type="KEGG" id="smu:SMU_2031"/>
<dbReference type="PATRIC" id="fig|210007.7.peg.1811"/>
<dbReference type="eggNOG" id="COG0264">
    <property type="taxonomic scope" value="Bacteria"/>
</dbReference>
<dbReference type="HOGENOM" id="CLU_047155_0_1_9"/>
<dbReference type="OrthoDB" id="9808348at2"/>
<dbReference type="PhylomeDB" id="Q8DS12"/>
<dbReference type="Proteomes" id="UP000002512">
    <property type="component" value="Chromosome"/>
</dbReference>
<dbReference type="GO" id="GO:0005737">
    <property type="term" value="C:cytoplasm"/>
    <property type="evidence" value="ECO:0007669"/>
    <property type="project" value="UniProtKB-SubCell"/>
</dbReference>
<dbReference type="GO" id="GO:0003746">
    <property type="term" value="F:translation elongation factor activity"/>
    <property type="evidence" value="ECO:0007669"/>
    <property type="project" value="UniProtKB-UniRule"/>
</dbReference>
<dbReference type="CDD" id="cd14275">
    <property type="entry name" value="UBA_EF-Ts"/>
    <property type="match status" value="1"/>
</dbReference>
<dbReference type="FunFam" id="1.10.286.20:FF:000004">
    <property type="entry name" value="Elongation factor Ts"/>
    <property type="match status" value="1"/>
</dbReference>
<dbReference type="FunFam" id="1.10.8.10:FF:000001">
    <property type="entry name" value="Elongation factor Ts"/>
    <property type="match status" value="1"/>
</dbReference>
<dbReference type="FunFam" id="3.30.479.20:FF:000013">
    <property type="entry name" value="Elongation factor Ts"/>
    <property type="match status" value="1"/>
</dbReference>
<dbReference type="Gene3D" id="1.10.286.20">
    <property type="match status" value="1"/>
</dbReference>
<dbReference type="Gene3D" id="1.10.8.10">
    <property type="entry name" value="DNA helicase RuvA subunit, C-terminal domain"/>
    <property type="match status" value="1"/>
</dbReference>
<dbReference type="Gene3D" id="3.30.479.20">
    <property type="entry name" value="Elongation factor Ts, dimerisation domain"/>
    <property type="match status" value="2"/>
</dbReference>
<dbReference type="HAMAP" id="MF_00050">
    <property type="entry name" value="EF_Ts"/>
    <property type="match status" value="1"/>
</dbReference>
<dbReference type="InterPro" id="IPR036402">
    <property type="entry name" value="EF-Ts_dimer_sf"/>
</dbReference>
<dbReference type="InterPro" id="IPR001816">
    <property type="entry name" value="Transl_elong_EFTs/EF1B"/>
</dbReference>
<dbReference type="InterPro" id="IPR014039">
    <property type="entry name" value="Transl_elong_EFTs/EF1B_dimer"/>
</dbReference>
<dbReference type="InterPro" id="IPR018101">
    <property type="entry name" value="Transl_elong_Ts_CS"/>
</dbReference>
<dbReference type="InterPro" id="IPR009060">
    <property type="entry name" value="UBA-like_sf"/>
</dbReference>
<dbReference type="NCBIfam" id="TIGR00116">
    <property type="entry name" value="tsf"/>
    <property type="match status" value="1"/>
</dbReference>
<dbReference type="PANTHER" id="PTHR11741">
    <property type="entry name" value="ELONGATION FACTOR TS"/>
    <property type="match status" value="1"/>
</dbReference>
<dbReference type="PANTHER" id="PTHR11741:SF0">
    <property type="entry name" value="ELONGATION FACTOR TS, MITOCHONDRIAL"/>
    <property type="match status" value="1"/>
</dbReference>
<dbReference type="Pfam" id="PF00889">
    <property type="entry name" value="EF_TS"/>
    <property type="match status" value="2"/>
</dbReference>
<dbReference type="SUPFAM" id="SSF54713">
    <property type="entry name" value="Elongation factor Ts (EF-Ts), dimerisation domain"/>
    <property type="match status" value="1"/>
</dbReference>
<dbReference type="SUPFAM" id="SSF46934">
    <property type="entry name" value="UBA-like"/>
    <property type="match status" value="1"/>
</dbReference>
<dbReference type="PROSITE" id="PS01126">
    <property type="entry name" value="EF_TS_1"/>
    <property type="match status" value="1"/>
</dbReference>
<dbReference type="PROSITE" id="PS01127">
    <property type="entry name" value="EF_TS_2"/>
    <property type="match status" value="1"/>
</dbReference>
<evidence type="ECO:0000255" key="1">
    <source>
        <dbReference type="HAMAP-Rule" id="MF_00050"/>
    </source>
</evidence>
<gene>
    <name evidence="1" type="primary">tsf</name>
    <name type="ordered locus">SMU_2031</name>
</gene>
<protein>
    <recommendedName>
        <fullName evidence="1">Elongation factor Ts</fullName>
        <shortName evidence="1">EF-Ts</shortName>
    </recommendedName>
</protein>
<organism>
    <name type="scientific">Streptococcus mutans serotype c (strain ATCC 700610 / UA159)</name>
    <dbReference type="NCBI Taxonomy" id="210007"/>
    <lineage>
        <taxon>Bacteria</taxon>
        <taxon>Bacillati</taxon>
        <taxon>Bacillota</taxon>
        <taxon>Bacilli</taxon>
        <taxon>Lactobacillales</taxon>
        <taxon>Streptococcaceae</taxon>
        <taxon>Streptococcus</taxon>
    </lineage>
</organism>